<reference key="1">
    <citation type="journal article" date="2001" name="Genome Res.">
        <title>The complete genome sequence of the lactic acid bacterium Lactococcus lactis ssp. lactis IL1403.</title>
        <authorList>
            <person name="Bolotin A."/>
            <person name="Wincker P."/>
            <person name="Mauger S."/>
            <person name="Jaillon O."/>
            <person name="Malarme K."/>
            <person name="Weissenbach J."/>
            <person name="Ehrlich S.D."/>
            <person name="Sorokin A."/>
        </authorList>
    </citation>
    <scope>NUCLEOTIDE SEQUENCE [LARGE SCALE GENOMIC DNA]</scope>
    <source>
        <strain>IL1403</strain>
    </source>
</reference>
<dbReference type="EC" id="3.1.26.4" evidence="1"/>
<dbReference type="EMBL" id="AE005176">
    <property type="protein sequence ID" value="AAK06355.1"/>
    <property type="molecule type" value="Genomic_DNA"/>
</dbReference>
<dbReference type="PIR" id="A86907">
    <property type="entry name" value="A86907"/>
</dbReference>
<dbReference type="RefSeq" id="NP_268414.1">
    <property type="nucleotide sequence ID" value="NC_002662.1"/>
</dbReference>
<dbReference type="RefSeq" id="WP_010906420.1">
    <property type="nucleotide sequence ID" value="NC_002662.1"/>
</dbReference>
<dbReference type="SMR" id="Q9CDG3"/>
<dbReference type="PaxDb" id="272623-L132875"/>
<dbReference type="EnsemblBacteria" id="AAK06355">
    <property type="protein sequence ID" value="AAK06355"/>
    <property type="gene ID" value="L132875"/>
</dbReference>
<dbReference type="KEGG" id="lla:L132875"/>
<dbReference type="PATRIC" id="fig|272623.7.peg.2422"/>
<dbReference type="eggNOG" id="COG1039">
    <property type="taxonomic scope" value="Bacteria"/>
</dbReference>
<dbReference type="HOGENOM" id="CLU_059546_1_0_9"/>
<dbReference type="OrthoDB" id="9777935at2"/>
<dbReference type="Proteomes" id="UP000002196">
    <property type="component" value="Chromosome"/>
</dbReference>
<dbReference type="GO" id="GO:0005737">
    <property type="term" value="C:cytoplasm"/>
    <property type="evidence" value="ECO:0007669"/>
    <property type="project" value="UniProtKB-SubCell"/>
</dbReference>
<dbReference type="GO" id="GO:0032299">
    <property type="term" value="C:ribonuclease H2 complex"/>
    <property type="evidence" value="ECO:0007669"/>
    <property type="project" value="TreeGrafter"/>
</dbReference>
<dbReference type="GO" id="GO:0000287">
    <property type="term" value="F:magnesium ion binding"/>
    <property type="evidence" value="ECO:0007669"/>
    <property type="project" value="UniProtKB-UniRule"/>
</dbReference>
<dbReference type="GO" id="GO:0003723">
    <property type="term" value="F:RNA binding"/>
    <property type="evidence" value="ECO:0007669"/>
    <property type="project" value="InterPro"/>
</dbReference>
<dbReference type="GO" id="GO:0004523">
    <property type="term" value="F:RNA-DNA hybrid ribonuclease activity"/>
    <property type="evidence" value="ECO:0007669"/>
    <property type="project" value="UniProtKB-UniRule"/>
</dbReference>
<dbReference type="GO" id="GO:0043137">
    <property type="term" value="P:DNA replication, removal of RNA primer"/>
    <property type="evidence" value="ECO:0007669"/>
    <property type="project" value="TreeGrafter"/>
</dbReference>
<dbReference type="GO" id="GO:0006298">
    <property type="term" value="P:mismatch repair"/>
    <property type="evidence" value="ECO:0007669"/>
    <property type="project" value="TreeGrafter"/>
</dbReference>
<dbReference type="CDD" id="cd06590">
    <property type="entry name" value="RNase_HII_bacteria_HIII_like"/>
    <property type="match status" value="1"/>
</dbReference>
<dbReference type="CDD" id="cd14796">
    <property type="entry name" value="RNAse_HIII_N"/>
    <property type="match status" value="1"/>
</dbReference>
<dbReference type="FunFam" id="3.30.420.10:FF:000047">
    <property type="entry name" value="Ribonuclease HIII"/>
    <property type="match status" value="1"/>
</dbReference>
<dbReference type="Gene3D" id="3.30.420.10">
    <property type="entry name" value="Ribonuclease H-like superfamily/Ribonuclease H"/>
    <property type="match status" value="1"/>
</dbReference>
<dbReference type="Gene3D" id="3.30.310.10">
    <property type="entry name" value="TATA-Binding Protein"/>
    <property type="match status" value="1"/>
</dbReference>
<dbReference type="HAMAP" id="MF_00053">
    <property type="entry name" value="RNase_HIII"/>
    <property type="match status" value="1"/>
</dbReference>
<dbReference type="InterPro" id="IPR001352">
    <property type="entry name" value="RNase_HII/HIII"/>
</dbReference>
<dbReference type="InterPro" id="IPR024567">
    <property type="entry name" value="RNase_HII/HIII_dom"/>
</dbReference>
<dbReference type="InterPro" id="IPR004641">
    <property type="entry name" value="RNase_HIII"/>
</dbReference>
<dbReference type="InterPro" id="IPR024568">
    <property type="entry name" value="RNase_HIII_N"/>
</dbReference>
<dbReference type="InterPro" id="IPR012337">
    <property type="entry name" value="RNaseH-like_sf"/>
</dbReference>
<dbReference type="InterPro" id="IPR036397">
    <property type="entry name" value="RNaseH_sf"/>
</dbReference>
<dbReference type="InterPro" id="IPR012295">
    <property type="entry name" value="TBP_dom_sf"/>
</dbReference>
<dbReference type="NCBIfam" id="TIGR00716">
    <property type="entry name" value="rnhC"/>
    <property type="match status" value="1"/>
</dbReference>
<dbReference type="PANTHER" id="PTHR10954:SF23">
    <property type="entry name" value="RIBONUCLEASE"/>
    <property type="match status" value="1"/>
</dbReference>
<dbReference type="PANTHER" id="PTHR10954">
    <property type="entry name" value="RIBONUCLEASE H2 SUBUNIT A"/>
    <property type="match status" value="1"/>
</dbReference>
<dbReference type="Pfam" id="PF11858">
    <property type="entry name" value="DUF3378"/>
    <property type="match status" value="1"/>
</dbReference>
<dbReference type="Pfam" id="PF01351">
    <property type="entry name" value="RNase_HII"/>
    <property type="match status" value="1"/>
</dbReference>
<dbReference type="PIRSF" id="PIRSF037748">
    <property type="entry name" value="RnhC"/>
    <property type="match status" value="1"/>
</dbReference>
<dbReference type="SUPFAM" id="SSF53098">
    <property type="entry name" value="Ribonuclease H-like"/>
    <property type="match status" value="1"/>
</dbReference>
<dbReference type="PROSITE" id="PS51975">
    <property type="entry name" value="RNASE_H_2"/>
    <property type="match status" value="1"/>
</dbReference>
<protein>
    <recommendedName>
        <fullName evidence="1">Ribonuclease HIII</fullName>
        <shortName evidence="1">RNase HIII</shortName>
        <ecNumber evidence="1">3.1.26.4</ecNumber>
    </recommendedName>
</protein>
<comment type="function">
    <text evidence="1">Endonuclease that specifically degrades the RNA of RNA-DNA hybrids.</text>
</comment>
<comment type="catalytic activity">
    <reaction evidence="1">
        <text>Endonucleolytic cleavage to 5'-phosphomonoester.</text>
        <dbReference type="EC" id="3.1.26.4"/>
    </reaction>
</comment>
<comment type="cofactor">
    <cofactor evidence="1">
        <name>Mn(2+)</name>
        <dbReference type="ChEBI" id="CHEBI:29035"/>
    </cofactor>
    <cofactor evidence="1">
        <name>Mg(2+)</name>
        <dbReference type="ChEBI" id="CHEBI:18420"/>
    </cofactor>
    <text evidence="1">Manganese or magnesium. Binds 1 divalent metal ion per monomer in the absence of substrate. May bind a second metal ion after substrate binding.</text>
</comment>
<comment type="subcellular location">
    <subcellularLocation>
        <location evidence="1">Cytoplasm</location>
    </subcellularLocation>
</comment>
<comment type="similarity">
    <text evidence="1">Belongs to the RNase HII family. RnhC subfamily.</text>
</comment>
<name>RNH3_LACLA</name>
<keyword id="KW-0963">Cytoplasm</keyword>
<keyword id="KW-0255">Endonuclease</keyword>
<keyword id="KW-0378">Hydrolase</keyword>
<keyword id="KW-0460">Magnesium</keyword>
<keyword id="KW-0479">Metal-binding</keyword>
<keyword id="KW-0540">Nuclease</keyword>
<keyword id="KW-1185">Reference proteome</keyword>
<evidence type="ECO:0000255" key="1">
    <source>
        <dbReference type="HAMAP-Rule" id="MF_00053"/>
    </source>
</evidence>
<evidence type="ECO:0000255" key="2">
    <source>
        <dbReference type="PROSITE-ProRule" id="PRU01319"/>
    </source>
</evidence>
<sequence length="292" mass="32205">MNIVLKLETKERQQLAEKYKSYEQVSKNPYITFFAKVGKTSISVYTSGKVVFQGNEAEKLASDFGHIAQVVPQKQTNLIGTDEVGNGSYFGGLMVTASFVSEENLNFLKEIGVADSKKLTDEKICQIAPKLIDRIPHVALVVEPAKYNEVIASGYNAVSIKVALHNQAIYLLEKQLGHKPENIVIDAFTTEANYKKYVNKEQNHPLTKVTLLTKAEDQFLAVAVSSIISRYLFLENLKKLSKESGFTLPSGAGNLSDKIAAQIIKSQGVDALNQLAKLHFANTQKAIKIAQL</sequence>
<proteinExistence type="inferred from homology"/>
<gene>
    <name evidence="1" type="primary">rnhC</name>
    <name type="synonym">rnhA</name>
    <name type="ordered locus">LL2257</name>
    <name type="ORF">L132875</name>
</gene>
<feature type="chain" id="PRO_0000111686" description="Ribonuclease HIII">
    <location>
        <begin position="1"/>
        <end position="292"/>
    </location>
</feature>
<feature type="domain" description="RNase H type-2" evidence="2">
    <location>
        <begin position="76"/>
        <end position="292"/>
    </location>
</feature>
<feature type="binding site" evidence="1">
    <location>
        <position position="82"/>
    </location>
    <ligand>
        <name>a divalent metal cation</name>
        <dbReference type="ChEBI" id="CHEBI:60240"/>
    </ligand>
</feature>
<feature type="binding site" evidence="1">
    <location>
        <position position="83"/>
    </location>
    <ligand>
        <name>a divalent metal cation</name>
        <dbReference type="ChEBI" id="CHEBI:60240"/>
    </ligand>
</feature>
<feature type="binding site" evidence="1">
    <location>
        <position position="186"/>
    </location>
    <ligand>
        <name>a divalent metal cation</name>
        <dbReference type="ChEBI" id="CHEBI:60240"/>
    </ligand>
</feature>
<organism>
    <name type="scientific">Lactococcus lactis subsp. lactis (strain IL1403)</name>
    <name type="common">Streptococcus lactis</name>
    <dbReference type="NCBI Taxonomy" id="272623"/>
    <lineage>
        <taxon>Bacteria</taxon>
        <taxon>Bacillati</taxon>
        <taxon>Bacillota</taxon>
        <taxon>Bacilli</taxon>
        <taxon>Lactobacillales</taxon>
        <taxon>Streptococcaceae</taxon>
        <taxon>Lactococcus</taxon>
    </lineage>
</organism>
<accession>Q9CDG3</accession>